<gene>
    <name evidence="15" type="primary">Cldn4</name>
    <name evidence="10" type="synonym">Cper</name>
    <name evidence="10" type="synonym">Cpetr1</name>
</gene>
<keyword id="KW-0965">Cell junction</keyword>
<keyword id="KW-1003">Cell membrane</keyword>
<keyword id="KW-0868">Chloride</keyword>
<keyword id="KW-0869">Chloride channel</keyword>
<keyword id="KW-1015">Disulfide bond</keyword>
<keyword id="KW-0407">Ion channel</keyword>
<keyword id="KW-0406">Ion transport</keyword>
<keyword id="KW-0472">Membrane</keyword>
<keyword id="KW-0597">Phosphoprotein</keyword>
<keyword id="KW-1185">Reference proteome</keyword>
<keyword id="KW-0796">Tight junction</keyword>
<keyword id="KW-0812">Transmembrane</keyword>
<keyword id="KW-1133">Transmembrane helix</keyword>
<keyword id="KW-0813">Transport</keyword>
<reference key="1">
    <citation type="journal article" date="1997" name="J. Biol. Chem.">
        <title>Clostridium perfringens enterotoxin utilizes two structurally related membrane proteins as functional receptors in vivo.</title>
        <authorList>
            <person name="Katahira J."/>
            <person name="Sugiyama H."/>
            <person name="Inoue N."/>
            <person name="Horiguchi Y."/>
            <person name="Matsuda M."/>
            <person name="Sugimoto N."/>
        </authorList>
    </citation>
    <scope>NUCLEOTIDE SEQUENCE [MRNA]</scope>
</reference>
<reference key="2">
    <citation type="journal article" date="1999" name="Proc. Natl. Acad. Sci. U.S.A.">
        <title>Claudin multigene family encoding four-transmembrane domain protein components of tight junction strands.</title>
        <authorList>
            <person name="Morita K."/>
            <person name="Furuse M."/>
            <person name="Fujimoto K."/>
            <person name="Tsukita S."/>
        </authorList>
    </citation>
    <scope>NUCLEOTIDE SEQUENCE [MRNA]</scope>
    <scope>SUBCELLULAR LOCATION</scope>
    <scope>TISSUE SPECIFICITY</scope>
    <source>
        <tissue>Kidney</tissue>
    </source>
</reference>
<reference key="3">
    <citation type="journal article" date="1999" name="J. Cell Biol.">
        <title>Direct binding of three tight junction-associated MAGUKs, ZO-1, ZO-2, and ZO-3, with the COOH termini of claudins.</title>
        <authorList>
            <person name="Itoh M."/>
            <person name="Furuse M."/>
            <person name="Morita K."/>
            <person name="Kubota K."/>
            <person name="Saitou M."/>
            <person name="Tsukita S."/>
        </authorList>
    </citation>
    <scope>INTERACTION WITH TJP1; TJP2 AND TJP3</scope>
</reference>
<reference key="4">
    <citation type="journal article" date="2005" name="J. Biol. Chem.">
        <title>EphA2 phosphorylates the cytoplasmic tail of Claudin-4 and mediates paracellular permeability.</title>
        <authorList>
            <person name="Tanaka M."/>
            <person name="Kamata R."/>
            <person name="Sakai R."/>
        </authorList>
    </citation>
    <scope>INTERACTION WITH TJP1</scope>
</reference>
<reference key="5">
    <citation type="journal article" date="2010" name="Proc. Natl. Acad. Sci. U.S.A.">
        <title>Claudin-4 forms paracellular chloride channel in the kidney and requires claudin-8 for tight junction localization.</title>
        <authorList>
            <person name="Hou J."/>
            <person name="Renigunta A."/>
            <person name="Yang J."/>
            <person name="Waldegger S."/>
        </authorList>
    </citation>
    <scope>FUNCTION</scope>
    <scope>TRANSPORTER ACTIVITY</scope>
    <scope>CAUTION</scope>
    <scope>SUBCELLULAR LOCATION</scope>
    <scope>TISSUE SPECIFICITY</scope>
    <scope>INTERACTION WITH CLDN8</scope>
    <scope>MUTAGENESIS OF ARG-31; GLU-48; LYS-65; ASP-68 AND ASP-76</scope>
</reference>
<reference key="6">
    <citation type="journal article" date="2015" name="Proc. Natl. Acad. Sci. U.S.A.">
        <title>KLHL3 regulates paracellular chloride transport in the kidney by ubiquitination of claudin-8.</title>
        <authorList>
            <person name="Gong Y."/>
            <person name="Wang J."/>
            <person name="Yang J."/>
            <person name="Gonzales E."/>
            <person name="Perez R."/>
            <person name="Hou J."/>
        </authorList>
    </citation>
    <scope>FUNCTION</scope>
    <scope>SUBCELLULAR LOCATION</scope>
</reference>
<reference key="7">
    <citation type="journal article" date="2019" name="Cell. Mol. Life Sci.">
        <title>Tight junction proteins at the blood-brain barrier: far more than claudin-5.</title>
        <authorList>
            <person name="Berndt P."/>
            <person name="Winkler L."/>
            <person name="Cording J."/>
            <person name="Breitkreuz-Korff O."/>
            <person name="Rex A."/>
            <person name="Dithmer S."/>
            <person name="Rausch V."/>
            <person name="Blasig R."/>
            <person name="Richter M."/>
            <person name="Sporbert A."/>
            <person name="Wolburg H."/>
            <person name="Blasig I.E."/>
            <person name="Haseloff R.F."/>
        </authorList>
    </citation>
    <scope>SUBCELLULAR LOCATION</scope>
</reference>
<reference key="8">
    <citation type="journal article" date="2022" name="Nat. Commun.">
        <title>Tight junction channel regulation by interclaudin interference.</title>
        <authorList>
            <person name="Shashikanth N."/>
            <person name="France M.M."/>
            <person name="Xiao R."/>
            <person name="Haest X."/>
            <person name="Rizzo H.E."/>
            <person name="Yeste J."/>
            <person name="Reiner J."/>
            <person name="Turner J.R."/>
        </authorList>
    </citation>
    <scope>FUNCTION</scope>
    <scope>CAUTION</scope>
</reference>
<comment type="function">
    <text evidence="1 4 5 7">Can associate with other claudins to regulate tight junction structural and functional strand dynamics (By similarity) (PubMed:20921420, PubMed:35773259). May coassemble with CLDN8 into tight junction strands containing anion-selective channels that convey paracellular chloride permeability in renal collecting ducts (PubMed:20921420, PubMed:25831548). May integrate into CLDN3 strands to modulate localized tight junction barrier properties (By similarity). May disrupt strand assembly of channel-forming CLDN2 and CLDN15 and inhibit cation conductance. Cannot form tight junction strands on its own (By similarity).</text>
</comment>
<comment type="catalytic activity">
    <reaction evidence="12">
        <text>chloride(in) = chloride(out)</text>
        <dbReference type="Rhea" id="RHEA:29823"/>
        <dbReference type="ChEBI" id="CHEBI:17996"/>
    </reaction>
</comment>
<comment type="catalytic activity">
    <reaction evidence="12">
        <text>bromide(in) = bromide(out)</text>
        <dbReference type="Rhea" id="RHEA:75383"/>
        <dbReference type="ChEBI" id="CHEBI:15858"/>
    </reaction>
</comment>
<comment type="catalytic activity">
    <reaction evidence="12">
        <text>iodide(out) = iodide(in)</text>
        <dbReference type="Rhea" id="RHEA:66324"/>
        <dbReference type="ChEBI" id="CHEBI:16382"/>
    </reaction>
</comment>
<comment type="catalytic activity">
    <reaction evidence="12">
        <text>fluoride(in) = fluoride(out)</text>
        <dbReference type="Rhea" id="RHEA:76159"/>
        <dbReference type="ChEBI" id="CHEBI:17051"/>
    </reaction>
</comment>
<comment type="subunit">
    <text evidence="1">Can form heteropolymeric strands with other claudins (By similarity). Interacts with CLDN8 (PubMed:20921420). Interacts with CLDN1 (By similarity). Directly interacts with TJP1/ZO-1, TJP2/ZO-2 and TJP3/ZO-3 (PubMed:10601346, PubMed:16236711). Interacts with EPHA2; phosphorylates CLDN4 and may regulate tight junctions (By similarity).</text>
</comment>
<comment type="subcellular location">
    <subcellularLocation>
        <location evidence="4 5 6 8">Cell junction</location>
        <location evidence="4 5 6 8">Tight junction</location>
    </subcellularLocation>
    <subcellularLocation>
        <location evidence="4 8">Cell membrane</location>
        <topology evidence="2">Multi-pass membrane protein</topology>
    </subcellularLocation>
</comment>
<comment type="tissue specificity">
    <text evidence="4 8">Expressed primarily in lung and kidney (PubMed:9892664). Present in both cortical and medullar collecting ducts (at protein level) (PubMed:20921420).</text>
</comment>
<comment type="PTM">
    <text evidence="1">Phosphorylated. Phosphorylation by EPHA2 is stimulated by EFNA1 and alters interaction with TJP1 (By similarity).</text>
</comment>
<comment type="similarity">
    <text evidence="11">Belongs to the claudin family.</text>
</comment>
<comment type="caution">
    <text evidence="12 13 14">The intrinsic role of CLDN4 is debated. A function as an inter-claudin regulator has recently been postulated and may well explain both channel-forming and barrier properties inferred by knockout studies.</text>
</comment>
<proteinExistence type="evidence at protein level"/>
<dbReference type="EMBL" id="AB000713">
    <property type="protein sequence ID" value="BAA22985.1"/>
    <property type="molecule type" value="mRNA"/>
</dbReference>
<dbReference type="EMBL" id="AF087822">
    <property type="protein sequence ID" value="AAD09757.1"/>
    <property type="molecule type" value="mRNA"/>
</dbReference>
<dbReference type="CCDS" id="CCDS19728.1"/>
<dbReference type="RefSeq" id="NP_034033.1">
    <property type="nucleotide sequence ID" value="NM_009903.2"/>
</dbReference>
<dbReference type="SMR" id="O35054"/>
<dbReference type="BioGRID" id="198746">
    <property type="interactions" value="1"/>
</dbReference>
<dbReference type="DIP" id="DIP-40781N"/>
<dbReference type="FunCoup" id="O35054">
    <property type="interactions" value="300"/>
</dbReference>
<dbReference type="IntAct" id="O35054">
    <property type="interactions" value="1"/>
</dbReference>
<dbReference type="MINT" id="O35054"/>
<dbReference type="STRING" id="10090.ENSMUSP00000053420"/>
<dbReference type="iPTMnet" id="O35054"/>
<dbReference type="PhosphoSitePlus" id="O35054"/>
<dbReference type="PaxDb" id="10090-ENSMUSP00000053420"/>
<dbReference type="ProteomicsDB" id="283378"/>
<dbReference type="Antibodypedia" id="3618">
    <property type="antibodies" value="607 antibodies from 39 providers"/>
</dbReference>
<dbReference type="DNASU" id="12740"/>
<dbReference type="Ensembl" id="ENSMUST00000051401.4">
    <property type="protein sequence ID" value="ENSMUSP00000053420.3"/>
    <property type="gene ID" value="ENSMUSG00000047501.4"/>
</dbReference>
<dbReference type="GeneID" id="12740"/>
<dbReference type="KEGG" id="mmu:12740"/>
<dbReference type="UCSC" id="uc008zxd.3">
    <property type="organism name" value="mouse"/>
</dbReference>
<dbReference type="AGR" id="MGI:1313314"/>
<dbReference type="CTD" id="1364"/>
<dbReference type="MGI" id="MGI:1313314">
    <property type="gene designation" value="Cldn4"/>
</dbReference>
<dbReference type="VEuPathDB" id="HostDB:ENSMUSG00000047501"/>
<dbReference type="eggNOG" id="ENOG502QSCN">
    <property type="taxonomic scope" value="Eukaryota"/>
</dbReference>
<dbReference type="GeneTree" id="ENSGT00940000154762"/>
<dbReference type="HOGENOM" id="CLU_076370_0_0_1"/>
<dbReference type="InParanoid" id="O35054"/>
<dbReference type="OMA" id="NCIENEA"/>
<dbReference type="OrthoDB" id="8830244at2759"/>
<dbReference type="PhylomeDB" id="O35054"/>
<dbReference type="TreeFam" id="TF331936"/>
<dbReference type="BioGRID-ORCS" id="12740">
    <property type="hits" value="3 hits in 76 CRISPR screens"/>
</dbReference>
<dbReference type="ChiTaRS" id="Cldn4">
    <property type="organism name" value="mouse"/>
</dbReference>
<dbReference type="PRO" id="PR:O35054"/>
<dbReference type="Proteomes" id="UP000000589">
    <property type="component" value="Chromosome 5"/>
</dbReference>
<dbReference type="RNAct" id="O35054">
    <property type="molecule type" value="protein"/>
</dbReference>
<dbReference type="Bgee" id="ENSMUSG00000047501">
    <property type="expression patterns" value="Expressed in endoderm of midgut and 118 other cell types or tissues"/>
</dbReference>
<dbReference type="ExpressionAtlas" id="O35054">
    <property type="expression patterns" value="baseline and differential"/>
</dbReference>
<dbReference type="GO" id="GO:0016324">
    <property type="term" value="C:apical plasma membrane"/>
    <property type="evidence" value="ECO:0007669"/>
    <property type="project" value="Ensembl"/>
</dbReference>
<dbReference type="GO" id="GO:0016327">
    <property type="term" value="C:apicolateral plasma membrane"/>
    <property type="evidence" value="ECO:0000314"/>
    <property type="project" value="UniProtKB"/>
</dbReference>
<dbReference type="GO" id="GO:0009925">
    <property type="term" value="C:basal plasma membrane"/>
    <property type="evidence" value="ECO:0007669"/>
    <property type="project" value="Ensembl"/>
</dbReference>
<dbReference type="GO" id="GO:0005923">
    <property type="term" value="C:bicellular tight junction"/>
    <property type="evidence" value="ECO:0000314"/>
    <property type="project" value="UniProtKB"/>
</dbReference>
<dbReference type="GO" id="GO:0034707">
    <property type="term" value="C:chloride channel complex"/>
    <property type="evidence" value="ECO:0007669"/>
    <property type="project" value="UniProtKB-KW"/>
</dbReference>
<dbReference type="GO" id="GO:0016328">
    <property type="term" value="C:lateral plasma membrane"/>
    <property type="evidence" value="ECO:0007669"/>
    <property type="project" value="Ensembl"/>
</dbReference>
<dbReference type="GO" id="GO:0016020">
    <property type="term" value="C:membrane"/>
    <property type="evidence" value="ECO:0000303"/>
    <property type="project" value="UniProtKB"/>
</dbReference>
<dbReference type="GO" id="GO:0005886">
    <property type="term" value="C:plasma membrane"/>
    <property type="evidence" value="ECO:0000314"/>
    <property type="project" value="MGI"/>
</dbReference>
<dbReference type="GO" id="GO:0070160">
    <property type="term" value="C:tight junction"/>
    <property type="evidence" value="ECO:0000314"/>
    <property type="project" value="ARUK-UCL"/>
</dbReference>
<dbReference type="GO" id="GO:0005254">
    <property type="term" value="F:chloride channel activity"/>
    <property type="evidence" value="ECO:0007669"/>
    <property type="project" value="UniProtKB-KW"/>
</dbReference>
<dbReference type="GO" id="GO:0042802">
    <property type="term" value="F:identical protein binding"/>
    <property type="evidence" value="ECO:0000250"/>
    <property type="project" value="UniProtKB"/>
</dbReference>
<dbReference type="GO" id="GO:0005198">
    <property type="term" value="F:structural molecule activity"/>
    <property type="evidence" value="ECO:0007669"/>
    <property type="project" value="InterPro"/>
</dbReference>
<dbReference type="GO" id="GO:0016338">
    <property type="term" value="P:calcium-independent cell-cell adhesion via plasma membrane cell-adhesion molecules"/>
    <property type="evidence" value="ECO:0000250"/>
    <property type="project" value="UniProtKB"/>
</dbReference>
<dbReference type="GO" id="GO:0007623">
    <property type="term" value="P:circadian rhythm"/>
    <property type="evidence" value="ECO:0007669"/>
    <property type="project" value="Ensembl"/>
</dbReference>
<dbReference type="GO" id="GO:0007565">
    <property type="term" value="P:female pregnancy"/>
    <property type="evidence" value="ECO:0007669"/>
    <property type="project" value="Ensembl"/>
</dbReference>
<dbReference type="GO" id="GO:0160184">
    <property type="term" value="P:paracellular transport"/>
    <property type="evidence" value="ECO:0000315"/>
    <property type="project" value="UniProtKB"/>
</dbReference>
<dbReference type="GO" id="GO:0070293">
    <property type="term" value="P:renal absorption"/>
    <property type="evidence" value="ECO:0000315"/>
    <property type="project" value="UniProtKB"/>
</dbReference>
<dbReference type="GO" id="GO:0032570">
    <property type="term" value="P:response to progesterone"/>
    <property type="evidence" value="ECO:0007669"/>
    <property type="project" value="Ensembl"/>
</dbReference>
<dbReference type="FunFam" id="1.20.140.150:FF:000001">
    <property type="entry name" value="Claudin"/>
    <property type="match status" value="1"/>
</dbReference>
<dbReference type="Gene3D" id="1.20.140.150">
    <property type="match status" value="1"/>
</dbReference>
<dbReference type="InterPro" id="IPR006187">
    <property type="entry name" value="Claudin"/>
</dbReference>
<dbReference type="InterPro" id="IPR003550">
    <property type="entry name" value="Claudin4"/>
</dbReference>
<dbReference type="InterPro" id="IPR017974">
    <property type="entry name" value="Claudin_CS"/>
</dbReference>
<dbReference type="InterPro" id="IPR004031">
    <property type="entry name" value="PMP22/EMP/MP20/Claudin"/>
</dbReference>
<dbReference type="PANTHER" id="PTHR12002">
    <property type="entry name" value="CLAUDIN"/>
    <property type="match status" value="1"/>
</dbReference>
<dbReference type="Pfam" id="PF00822">
    <property type="entry name" value="PMP22_Claudin"/>
    <property type="match status" value="1"/>
</dbReference>
<dbReference type="PRINTS" id="PR01077">
    <property type="entry name" value="CLAUDIN"/>
</dbReference>
<dbReference type="PRINTS" id="PR01379">
    <property type="entry name" value="CLAUDIN4"/>
</dbReference>
<dbReference type="PROSITE" id="PS01346">
    <property type="entry name" value="CLAUDIN"/>
    <property type="match status" value="1"/>
</dbReference>
<accession>O35054</accession>
<organism>
    <name type="scientific">Mus musculus</name>
    <name type="common">Mouse</name>
    <dbReference type="NCBI Taxonomy" id="10090"/>
    <lineage>
        <taxon>Eukaryota</taxon>
        <taxon>Metazoa</taxon>
        <taxon>Chordata</taxon>
        <taxon>Craniata</taxon>
        <taxon>Vertebrata</taxon>
        <taxon>Euteleostomi</taxon>
        <taxon>Mammalia</taxon>
        <taxon>Eutheria</taxon>
        <taxon>Euarchontoglires</taxon>
        <taxon>Glires</taxon>
        <taxon>Rodentia</taxon>
        <taxon>Myomorpha</taxon>
        <taxon>Muroidea</taxon>
        <taxon>Muridae</taxon>
        <taxon>Murinae</taxon>
        <taxon>Mus</taxon>
        <taxon>Mus</taxon>
    </lineage>
</organism>
<evidence type="ECO:0000250" key="1">
    <source>
        <dbReference type="UniProtKB" id="O14493"/>
    </source>
</evidence>
<evidence type="ECO:0000255" key="2"/>
<evidence type="ECO:0000269" key="3">
    <source>
    </source>
</evidence>
<evidence type="ECO:0000269" key="4">
    <source>
    </source>
</evidence>
<evidence type="ECO:0000269" key="5">
    <source>
    </source>
</evidence>
<evidence type="ECO:0000269" key="6">
    <source>
    </source>
</evidence>
<evidence type="ECO:0000269" key="7">
    <source>
    </source>
</evidence>
<evidence type="ECO:0000269" key="8">
    <source>
    </source>
</evidence>
<evidence type="ECO:0000303" key="9">
    <source>
    </source>
</evidence>
<evidence type="ECO:0000303" key="10">
    <source>
    </source>
</evidence>
<evidence type="ECO:0000305" key="11"/>
<evidence type="ECO:0000305" key="12">
    <source>
    </source>
</evidence>
<evidence type="ECO:0000305" key="13">
    <source>
    </source>
</evidence>
<evidence type="ECO:0000305" key="14">
    <source>
    </source>
</evidence>
<evidence type="ECO:0000312" key="15">
    <source>
        <dbReference type="MGI" id="MGI:1313314"/>
    </source>
</evidence>
<protein>
    <recommendedName>
        <fullName evidence="9">Claudin-4</fullName>
    </recommendedName>
    <alternativeName>
        <fullName evidence="10">Clostridium perfringens enterotoxin receptor</fullName>
        <shortName evidence="10">CPE-R</shortName>
        <shortName evidence="10">CPE-receptor</shortName>
    </alternativeName>
</protein>
<sequence length="210" mass="22339">MASMGLQVLGISLAVLGWLGIILSCALPMWRVTAFIGSNIVTAQTSWEGLWMNCVVQSTGQMQCKMYDSMLALPQDLQAARALMVISIIVGALGMLLSVVGGKCTNCMEDETVKAKIMITAGAVFIVASMLIMVPVSWTAHNVIRDFYNPMVASGQKREMGASLYVGWAASGLLLLGGGLLCCSCPPRSNDKPYSAKYSAARSVPASNYV</sequence>
<name>CLD4_MOUSE</name>
<feature type="chain" id="PRO_0000144744" description="Claudin-4">
    <location>
        <begin position="1"/>
        <end position="210"/>
    </location>
</feature>
<feature type="topological domain" description="Cytoplasmic" evidence="2">
    <location>
        <begin position="1"/>
        <end position="7"/>
    </location>
</feature>
<feature type="transmembrane region" description="Helical" evidence="2">
    <location>
        <begin position="8"/>
        <end position="28"/>
    </location>
</feature>
<feature type="topological domain" description="Extracellular" evidence="2">
    <location>
        <begin position="29"/>
        <end position="81"/>
    </location>
</feature>
<feature type="transmembrane region" description="Helical" evidence="2">
    <location>
        <begin position="82"/>
        <end position="102"/>
    </location>
</feature>
<feature type="topological domain" description="Cytoplasmic" evidence="2">
    <location>
        <begin position="103"/>
        <end position="116"/>
    </location>
</feature>
<feature type="transmembrane region" description="Helical" evidence="2">
    <location>
        <begin position="117"/>
        <end position="137"/>
    </location>
</feature>
<feature type="topological domain" description="Extracellular" evidence="2">
    <location>
        <begin position="138"/>
        <end position="160"/>
    </location>
</feature>
<feature type="transmembrane region" description="Helical" evidence="2">
    <location>
        <begin position="161"/>
        <end position="181"/>
    </location>
</feature>
<feature type="topological domain" description="Cytoplasmic" evidence="2">
    <location>
        <begin position="182"/>
        <end position="210"/>
    </location>
</feature>
<feature type="region of interest" description="Interaction with EPHA2" evidence="1">
    <location>
        <begin position="1"/>
        <end position="103"/>
    </location>
</feature>
<feature type="region of interest" description="Interactions with TJP1, TJP2 and TJP3" evidence="3">
    <location>
        <begin position="209"/>
        <end position="210"/>
    </location>
</feature>
<feature type="modified residue" description="Phosphotyrosine; by EPHA2" evidence="1">
    <location>
        <position position="209"/>
    </location>
</feature>
<feature type="disulfide bond" evidence="1">
    <location>
        <begin position="54"/>
        <end position="64"/>
    </location>
</feature>
<feature type="mutagenesis site" description="No effect." evidence="4">
    <original>R</original>
    <variation>T</variation>
    <location>
        <position position="31"/>
    </location>
</feature>
<feature type="mutagenesis site" description="No effect." evidence="4">
    <original>E</original>
    <variation>Q</variation>
    <location>
        <position position="48"/>
    </location>
</feature>
<feature type="mutagenesis site" description="Abolishes ability to form paracellular chloride channel." evidence="4">
    <original>K</original>
    <variation>T</variation>
    <location>
        <position position="65"/>
    </location>
</feature>
<feature type="mutagenesis site" description="No effect." evidence="4">
    <original>D</original>
    <variation>N</variation>
    <location>
        <position position="68"/>
    </location>
</feature>
<feature type="mutagenesis site" description="No effect." evidence="4">
    <original>D</original>
    <variation>N</variation>
    <location>
        <position position="76"/>
    </location>
</feature>